<evidence type="ECO:0000255" key="1">
    <source>
        <dbReference type="HAMAP-Rule" id="MF_00592"/>
    </source>
</evidence>
<keyword id="KW-0963">Cytoplasm</keyword>
<keyword id="KW-0456">Lyase</keyword>
<keyword id="KW-1185">Reference proteome</keyword>
<keyword id="KW-0704">Schiff base</keyword>
<name>DEOC_PROMH</name>
<dbReference type="EC" id="4.1.2.4" evidence="1"/>
<dbReference type="EMBL" id="AM942759">
    <property type="protein sequence ID" value="CAR44776.1"/>
    <property type="molecule type" value="Genomic_DNA"/>
</dbReference>
<dbReference type="RefSeq" id="WP_004245640.1">
    <property type="nucleotide sequence ID" value="NC_010554.1"/>
</dbReference>
<dbReference type="SMR" id="B4EWA4"/>
<dbReference type="EnsemblBacteria" id="CAR44776">
    <property type="protein sequence ID" value="CAR44776"/>
    <property type="gene ID" value="PMI2416"/>
</dbReference>
<dbReference type="GeneID" id="6803010"/>
<dbReference type="KEGG" id="pmr:PMI2416"/>
<dbReference type="eggNOG" id="COG0274">
    <property type="taxonomic scope" value="Bacteria"/>
</dbReference>
<dbReference type="HOGENOM" id="CLU_053595_3_1_6"/>
<dbReference type="UniPathway" id="UPA00002">
    <property type="reaction ID" value="UER00468"/>
</dbReference>
<dbReference type="Proteomes" id="UP000008319">
    <property type="component" value="Chromosome"/>
</dbReference>
<dbReference type="GO" id="GO:0005737">
    <property type="term" value="C:cytoplasm"/>
    <property type="evidence" value="ECO:0007669"/>
    <property type="project" value="UniProtKB-SubCell"/>
</dbReference>
<dbReference type="GO" id="GO:0004139">
    <property type="term" value="F:deoxyribose-phosphate aldolase activity"/>
    <property type="evidence" value="ECO:0007669"/>
    <property type="project" value="UniProtKB-UniRule"/>
</dbReference>
<dbReference type="GO" id="GO:0006018">
    <property type="term" value="P:2-deoxyribose 1-phosphate catabolic process"/>
    <property type="evidence" value="ECO:0007669"/>
    <property type="project" value="UniProtKB-UniRule"/>
</dbReference>
<dbReference type="GO" id="GO:0016052">
    <property type="term" value="P:carbohydrate catabolic process"/>
    <property type="evidence" value="ECO:0007669"/>
    <property type="project" value="TreeGrafter"/>
</dbReference>
<dbReference type="GO" id="GO:0009264">
    <property type="term" value="P:deoxyribonucleotide catabolic process"/>
    <property type="evidence" value="ECO:0007669"/>
    <property type="project" value="InterPro"/>
</dbReference>
<dbReference type="CDD" id="cd00959">
    <property type="entry name" value="DeoC"/>
    <property type="match status" value="1"/>
</dbReference>
<dbReference type="FunFam" id="3.20.20.70:FF:000034">
    <property type="entry name" value="Deoxyribose-phosphate aldolase"/>
    <property type="match status" value="1"/>
</dbReference>
<dbReference type="Gene3D" id="3.20.20.70">
    <property type="entry name" value="Aldolase class I"/>
    <property type="match status" value="1"/>
</dbReference>
<dbReference type="HAMAP" id="MF_00592">
    <property type="entry name" value="DeoC_type2"/>
    <property type="match status" value="1"/>
</dbReference>
<dbReference type="InterPro" id="IPR013785">
    <property type="entry name" value="Aldolase_TIM"/>
</dbReference>
<dbReference type="InterPro" id="IPR011343">
    <property type="entry name" value="DeoC"/>
</dbReference>
<dbReference type="InterPro" id="IPR002915">
    <property type="entry name" value="DeoC/FbaB/LacD_aldolase"/>
</dbReference>
<dbReference type="InterPro" id="IPR023649">
    <property type="entry name" value="DeoC_typeII"/>
</dbReference>
<dbReference type="NCBIfam" id="TIGR00126">
    <property type="entry name" value="deoC"/>
    <property type="match status" value="1"/>
</dbReference>
<dbReference type="PANTHER" id="PTHR10889">
    <property type="entry name" value="DEOXYRIBOSE-PHOSPHATE ALDOLASE"/>
    <property type="match status" value="1"/>
</dbReference>
<dbReference type="PANTHER" id="PTHR10889:SF3">
    <property type="entry name" value="DEOXYRIBOSE-PHOSPHATE ALDOLASE"/>
    <property type="match status" value="1"/>
</dbReference>
<dbReference type="Pfam" id="PF01791">
    <property type="entry name" value="DeoC"/>
    <property type="match status" value="1"/>
</dbReference>
<dbReference type="PIRSF" id="PIRSF001357">
    <property type="entry name" value="DeoC"/>
    <property type="match status" value="1"/>
</dbReference>
<dbReference type="SMART" id="SM01133">
    <property type="entry name" value="DeoC"/>
    <property type="match status" value="1"/>
</dbReference>
<dbReference type="SUPFAM" id="SSF51569">
    <property type="entry name" value="Aldolase"/>
    <property type="match status" value="1"/>
</dbReference>
<gene>
    <name evidence="1" type="primary">deoC</name>
    <name type="ordered locus">PMI2416</name>
</gene>
<protein>
    <recommendedName>
        <fullName evidence="1">Deoxyribose-phosphate aldolase</fullName>
        <shortName evidence="1">DERA</shortName>
        <ecNumber evidence="1">4.1.2.4</ecNumber>
    </recommendedName>
    <alternativeName>
        <fullName evidence="1">2-deoxy-D-ribose 5-phosphate aldolase</fullName>
    </alternativeName>
    <alternativeName>
        <fullName evidence="1">Phosphodeoxyriboaldolase</fullName>
        <shortName evidence="1">Deoxyriboaldolase</shortName>
    </alternativeName>
</protein>
<accession>B4EWA4</accession>
<proteinExistence type="inferred from homology"/>
<comment type="function">
    <text evidence="1">Catalyzes a reversible aldol reaction between acetaldehyde and D-glyceraldehyde 3-phosphate to generate 2-deoxy-D-ribose 5-phosphate.</text>
</comment>
<comment type="catalytic activity">
    <reaction evidence="1">
        <text>2-deoxy-D-ribose 5-phosphate = D-glyceraldehyde 3-phosphate + acetaldehyde</text>
        <dbReference type="Rhea" id="RHEA:12821"/>
        <dbReference type="ChEBI" id="CHEBI:15343"/>
        <dbReference type="ChEBI" id="CHEBI:59776"/>
        <dbReference type="ChEBI" id="CHEBI:62877"/>
        <dbReference type="EC" id="4.1.2.4"/>
    </reaction>
</comment>
<comment type="pathway">
    <text evidence="1">Carbohydrate degradation; 2-deoxy-D-ribose 1-phosphate degradation; D-glyceraldehyde 3-phosphate and acetaldehyde from 2-deoxy-alpha-D-ribose 1-phosphate: step 2/2.</text>
</comment>
<comment type="subcellular location">
    <subcellularLocation>
        <location evidence="1">Cytoplasm</location>
    </subcellularLocation>
</comment>
<comment type="similarity">
    <text evidence="1">Belongs to the DeoC/FbaB aldolase family. DeoC type 2 subfamily.</text>
</comment>
<reference key="1">
    <citation type="journal article" date="2008" name="J. Bacteriol.">
        <title>Complete genome sequence of uropathogenic Proteus mirabilis, a master of both adherence and motility.</title>
        <authorList>
            <person name="Pearson M.M."/>
            <person name="Sebaihia M."/>
            <person name="Churcher C."/>
            <person name="Quail M.A."/>
            <person name="Seshasayee A.S."/>
            <person name="Luscombe N.M."/>
            <person name="Abdellah Z."/>
            <person name="Arrosmith C."/>
            <person name="Atkin B."/>
            <person name="Chillingworth T."/>
            <person name="Hauser H."/>
            <person name="Jagels K."/>
            <person name="Moule S."/>
            <person name="Mungall K."/>
            <person name="Norbertczak H."/>
            <person name="Rabbinowitsch E."/>
            <person name="Walker D."/>
            <person name="Whithead S."/>
            <person name="Thomson N.R."/>
            <person name="Rather P.N."/>
            <person name="Parkhill J."/>
            <person name="Mobley H.L.T."/>
        </authorList>
    </citation>
    <scope>NUCLEOTIDE SEQUENCE [LARGE SCALE GENOMIC DNA]</scope>
    <source>
        <strain>HI4320</strain>
    </source>
</reference>
<sequence length="259" mass="27631">MTDLTAAARLALSLMDLTTLNDDDTDEKVTKLCHQAKSPEGNTAAICIYPRFIPLARKVLREQGTPEIRIATVTNFPHGNDDLDIALAETNAALAYGADEVDVVFPYRALMAGNEQIGFDIVKACKDACAKAGALLKVIIETGELKDPALIRKASEISIKAGADFIKTSTGKVPVNATLESAELMLQVIHDMGVGKEVGFKPAGGVRTAEEAAQYLALANRIMGDNWVDARHFRFGASSLLGNLLATLGHGEQKSSSGY</sequence>
<organism>
    <name type="scientific">Proteus mirabilis (strain HI4320)</name>
    <dbReference type="NCBI Taxonomy" id="529507"/>
    <lineage>
        <taxon>Bacteria</taxon>
        <taxon>Pseudomonadati</taxon>
        <taxon>Pseudomonadota</taxon>
        <taxon>Gammaproteobacteria</taxon>
        <taxon>Enterobacterales</taxon>
        <taxon>Morganellaceae</taxon>
        <taxon>Proteus</taxon>
    </lineage>
</organism>
<feature type="chain" id="PRO_1000129810" description="Deoxyribose-phosphate aldolase">
    <location>
        <begin position="1"/>
        <end position="259"/>
    </location>
</feature>
<feature type="active site" description="Proton donor/acceptor" evidence="1">
    <location>
        <position position="102"/>
    </location>
</feature>
<feature type="active site" description="Schiff-base intermediate with acetaldehyde" evidence="1">
    <location>
        <position position="167"/>
    </location>
</feature>
<feature type="active site" description="Proton donor/acceptor" evidence="1">
    <location>
        <position position="201"/>
    </location>
</feature>